<comment type="function">
    <text evidence="1">Component of the large ribosomal subunit. The ribosome is a large ribonucleoprotein complex responsible for the synthesis of proteins in the cell.</text>
</comment>
<comment type="subunit">
    <text evidence="1">Component of the large ribosomal subunit.</text>
</comment>
<comment type="subcellular location">
    <subcellularLocation>
        <location evidence="1">Cytoplasm</location>
    </subcellularLocation>
</comment>
<comment type="similarity">
    <text evidence="3">Belongs to the universal ribosomal protein uL22 family.</text>
</comment>
<gene>
    <name type="primary">RPL17</name>
</gene>
<protein>
    <recommendedName>
        <fullName evidence="3">Large ribosomal subunit protein uL22</fullName>
    </recommendedName>
    <alternativeName>
        <fullName>60S ribosomal protein L17</fullName>
    </alternativeName>
</protein>
<dbReference type="EMBL" id="BC102600">
    <property type="protein sequence ID" value="AAI02601.1"/>
    <property type="molecule type" value="mRNA"/>
</dbReference>
<dbReference type="RefSeq" id="NP_001029631.1">
    <property type="nucleotide sequence ID" value="NM_001034459.2"/>
</dbReference>
<dbReference type="SMR" id="Q3T025"/>
<dbReference type="FunCoup" id="Q3T025">
    <property type="interactions" value="3098"/>
</dbReference>
<dbReference type="STRING" id="9913.ENSBTAP00000055998"/>
<dbReference type="PaxDb" id="9913-ENSBTAP00000050222"/>
<dbReference type="PeptideAtlas" id="Q3T025"/>
<dbReference type="Ensembl" id="ENSBTAT00000055065.3">
    <property type="protein sequence ID" value="ENSBTAP00000050222.3"/>
    <property type="gene ID" value="ENSBTAG00000022902.6"/>
</dbReference>
<dbReference type="Ensembl" id="ENSBTAT00000121602.1">
    <property type="protein sequence ID" value="ENSBTAP00000083928.1"/>
    <property type="gene ID" value="ENSBTAG00000060385.1"/>
</dbReference>
<dbReference type="GeneID" id="514046"/>
<dbReference type="KEGG" id="bta:514046"/>
<dbReference type="CTD" id="6139"/>
<dbReference type="eggNOG" id="KOG3353">
    <property type="taxonomic scope" value="Eukaryota"/>
</dbReference>
<dbReference type="GeneTree" id="ENSGT00950000183010"/>
<dbReference type="HOGENOM" id="CLU_083987_0_1_1"/>
<dbReference type="InParanoid" id="Q3T025"/>
<dbReference type="OrthoDB" id="10017723at2759"/>
<dbReference type="TreeFam" id="TF300042"/>
<dbReference type="CD-CODE" id="D7FE2080">
    <property type="entry name" value="Nucleolus"/>
</dbReference>
<dbReference type="Proteomes" id="UP000009136">
    <property type="component" value="Chromosome 21"/>
</dbReference>
<dbReference type="Proteomes" id="UP000009136">
    <property type="component" value="Chromosome 24"/>
</dbReference>
<dbReference type="GO" id="GO:0022625">
    <property type="term" value="C:cytosolic large ribosomal subunit"/>
    <property type="evidence" value="ECO:0000318"/>
    <property type="project" value="GO_Central"/>
</dbReference>
<dbReference type="GO" id="GO:0003735">
    <property type="term" value="F:structural constituent of ribosome"/>
    <property type="evidence" value="ECO:0000318"/>
    <property type="project" value="GO_Central"/>
</dbReference>
<dbReference type="GO" id="GO:0002181">
    <property type="term" value="P:cytoplasmic translation"/>
    <property type="evidence" value="ECO:0000318"/>
    <property type="project" value="GO_Central"/>
</dbReference>
<dbReference type="CDD" id="cd00336">
    <property type="entry name" value="Ribosomal_L22"/>
    <property type="match status" value="1"/>
</dbReference>
<dbReference type="FunFam" id="3.90.470.10:FF:000003">
    <property type="entry name" value="60S ribosomal protein L17"/>
    <property type="match status" value="1"/>
</dbReference>
<dbReference type="Gene3D" id="3.90.470.10">
    <property type="entry name" value="Ribosomal protein L22/L17"/>
    <property type="match status" value="1"/>
</dbReference>
<dbReference type="HAMAP" id="MF_01331_A">
    <property type="entry name" value="Ribosomal_uL22_A"/>
    <property type="match status" value="1"/>
</dbReference>
<dbReference type="InterPro" id="IPR001063">
    <property type="entry name" value="Ribosomal_uL22"/>
</dbReference>
<dbReference type="InterPro" id="IPR018260">
    <property type="entry name" value="Ribosomal_uL22_CS"/>
</dbReference>
<dbReference type="InterPro" id="IPR005721">
    <property type="entry name" value="Ribosomal_uL22_euk/arc"/>
</dbReference>
<dbReference type="InterPro" id="IPR036394">
    <property type="entry name" value="Ribosomal_uL22_sf"/>
</dbReference>
<dbReference type="NCBIfam" id="NF003260">
    <property type="entry name" value="PRK04223.1"/>
    <property type="match status" value="1"/>
</dbReference>
<dbReference type="NCBIfam" id="TIGR01038">
    <property type="entry name" value="uL22_arch_euk"/>
    <property type="match status" value="1"/>
</dbReference>
<dbReference type="PANTHER" id="PTHR11593">
    <property type="entry name" value="60S RIBOSOMAL PROTEIN L17"/>
    <property type="match status" value="1"/>
</dbReference>
<dbReference type="PANTHER" id="PTHR11593:SF10">
    <property type="entry name" value="60S RIBOSOMAL PROTEIN L17"/>
    <property type="match status" value="1"/>
</dbReference>
<dbReference type="Pfam" id="PF00237">
    <property type="entry name" value="Ribosomal_L22"/>
    <property type="match status" value="1"/>
</dbReference>
<dbReference type="SUPFAM" id="SSF54843">
    <property type="entry name" value="Ribosomal protein L22"/>
    <property type="match status" value="1"/>
</dbReference>
<dbReference type="PROSITE" id="PS00464">
    <property type="entry name" value="RIBOSOMAL_L22"/>
    <property type="match status" value="1"/>
</dbReference>
<accession>Q3T025</accession>
<evidence type="ECO:0000250" key="1">
    <source>
        <dbReference type="UniProtKB" id="P18621"/>
    </source>
</evidence>
<evidence type="ECO:0000256" key="2">
    <source>
        <dbReference type="SAM" id="MobiDB-lite"/>
    </source>
</evidence>
<evidence type="ECO:0000305" key="3"/>
<sequence>MVRYSLDPENPTKSCKSRGSNLRVHFKNTRETAQAIKGMHIRKATKYLKDVTLKKQCVPFRRYNGGVGRCAQAKQWGWTQGRWPKKSAEFLLHMLKNAESNAELKGLDVDSLVIEHIQVNKAPKMRRRTYRAHGRINPYMSSPCHIEMILTEKEQIVPKPEEEVAQKKKISQKKLKKQKLMARE</sequence>
<organism>
    <name type="scientific">Bos taurus</name>
    <name type="common">Bovine</name>
    <dbReference type="NCBI Taxonomy" id="9913"/>
    <lineage>
        <taxon>Eukaryota</taxon>
        <taxon>Metazoa</taxon>
        <taxon>Chordata</taxon>
        <taxon>Craniata</taxon>
        <taxon>Vertebrata</taxon>
        <taxon>Euteleostomi</taxon>
        <taxon>Mammalia</taxon>
        <taxon>Eutheria</taxon>
        <taxon>Laurasiatheria</taxon>
        <taxon>Artiodactyla</taxon>
        <taxon>Ruminantia</taxon>
        <taxon>Pecora</taxon>
        <taxon>Bovidae</taxon>
        <taxon>Bovinae</taxon>
        <taxon>Bos</taxon>
    </lineage>
</organism>
<reference key="1">
    <citation type="submission" date="2005-08" db="EMBL/GenBank/DDBJ databases">
        <authorList>
            <consortium name="NIH - Mammalian Gene Collection (MGC) project"/>
        </authorList>
    </citation>
    <scope>NUCLEOTIDE SEQUENCE [LARGE SCALE MRNA]</scope>
    <source>
        <strain>Crossbred X Angus</strain>
        <tissue>Liver</tissue>
    </source>
</reference>
<name>RL17_BOVIN</name>
<keyword id="KW-0963">Cytoplasm</keyword>
<keyword id="KW-1185">Reference proteome</keyword>
<keyword id="KW-0687">Ribonucleoprotein</keyword>
<keyword id="KW-0689">Ribosomal protein</keyword>
<proteinExistence type="evidence at transcript level"/>
<feature type="chain" id="PRO_0000240143" description="Large ribosomal subunit protein uL22">
    <location>
        <begin position="1"/>
        <end position="184"/>
    </location>
</feature>
<feature type="region of interest" description="Disordered" evidence="2">
    <location>
        <begin position="160"/>
        <end position="184"/>
    </location>
</feature>
<feature type="compositionally biased region" description="Basic residues" evidence="2">
    <location>
        <begin position="167"/>
        <end position="184"/>
    </location>
</feature>